<reference key="1">
    <citation type="journal article" date="1997" name="Nature">
        <title>The Rx homeobox gene is essential for vertebrate eye development.</title>
        <authorList>
            <person name="Mathers P.H."/>
            <person name="Grinberg A."/>
            <person name="Mahon K.A."/>
            <person name="Jamrich M."/>
        </authorList>
    </citation>
    <scope>NUCLEOTIDE SEQUENCE [MRNA]</scope>
    <source>
        <tissue>Embryo</tissue>
    </source>
</reference>
<reference key="2">
    <citation type="journal article" date="1997" name="Proc. Natl. Acad. Sci. U.S.A.">
        <title>Rax, a novel paired-type homeobox gene, shows expression in the anterior neural fold and developing retina.</title>
        <authorList>
            <person name="Furukawa T."/>
            <person name="Kozak C.A."/>
            <person name="Cepko C.L."/>
        </authorList>
    </citation>
    <scope>NUCLEOTIDE SEQUENCE [MRNA]</scope>
</reference>
<reference key="3">
    <citation type="submission" date="2005-09" db="EMBL/GenBank/DDBJ databases">
        <authorList>
            <person name="Mural R.J."/>
            <person name="Adams M.D."/>
            <person name="Myers E.W."/>
            <person name="Smith H.O."/>
            <person name="Venter J.C."/>
        </authorList>
    </citation>
    <scope>NUCLEOTIDE SEQUENCE [LARGE SCALE GENOMIC DNA]</scope>
</reference>
<reference key="4">
    <citation type="journal article" date="2004" name="Genome Res.">
        <title>The status, quality, and expansion of the NIH full-length cDNA project: the Mammalian Gene Collection (MGC).</title>
        <authorList>
            <consortium name="The MGC Project Team"/>
        </authorList>
    </citation>
    <scope>NUCLEOTIDE SEQUENCE [LARGE SCALE MRNA]</scope>
    <source>
        <tissue>Eye</tissue>
    </source>
</reference>
<gene>
    <name type="primary">Rax</name>
    <name type="synonym">Rx</name>
</gene>
<comment type="function">
    <text evidence="1">Plays a critical role in eye formation by regulating the initial specification of retinal cells and/or their subsequent proliferation. Binds to the photoreceptor conserved element-I (PCE-1/Ret 1) in the photoreceptor cell-specific arrestin promoter (By similarity).</text>
</comment>
<comment type="subcellular location">
    <subcellularLocation>
        <location>Nucleus</location>
    </subcellularLocation>
</comment>
<comment type="tissue specificity">
    <text>Expressed in the photoreceptor and inner nuclear layers.</text>
</comment>
<comment type="developmental stage">
    <text>Strongly expressed in anterior neural plate at 8.5 dpc, followed in optic sulci and ventral forebrain at 9.0 dpc, and in eye at 10.5 dpc uniformly expressed in neuroretina at 15.5 dpc, and at later stages, expression decreases.</text>
</comment>
<comment type="similarity">
    <text evidence="6">Belongs to the paired homeobox family. Bicoid subfamily.</text>
</comment>
<name>RX_MOUSE</name>
<protein>
    <recommendedName>
        <fullName>Retinal homeobox protein Rx</fullName>
    </recommendedName>
    <alternativeName>
        <fullName>Retina and anterior neural fold homeobox protein</fullName>
    </alternativeName>
</protein>
<feature type="chain" id="PRO_0000049277" description="Retinal homeobox protein Rx">
    <location>
        <begin position="1"/>
        <end position="342"/>
    </location>
</feature>
<feature type="DNA-binding region" description="Homeobox" evidence="3">
    <location>
        <begin position="136"/>
        <end position="195"/>
    </location>
</feature>
<feature type="region of interest" description="Disordered" evidence="5">
    <location>
        <begin position="44"/>
        <end position="140"/>
    </location>
</feature>
<feature type="region of interest" description="Disordered" evidence="5">
    <location>
        <begin position="208"/>
        <end position="295"/>
    </location>
</feature>
<feature type="short sequence motif" description="Octapeptide motif">
    <location>
        <begin position="33"/>
        <end position="40"/>
    </location>
</feature>
<feature type="short sequence motif" description="OAR" evidence="4">
    <location>
        <begin position="319"/>
        <end position="332"/>
    </location>
</feature>
<feature type="short sequence motif" description="Nuclear localization signal" evidence="2">
    <location>
        <begin position="325"/>
        <end position="329"/>
    </location>
</feature>
<feature type="compositionally biased region" description="Basic and acidic residues" evidence="5">
    <location>
        <begin position="55"/>
        <end position="66"/>
    </location>
</feature>
<feature type="compositionally biased region" description="Low complexity" evidence="5">
    <location>
        <begin position="208"/>
        <end position="225"/>
    </location>
</feature>
<feature type="compositionally biased region" description="Low complexity" evidence="5">
    <location>
        <begin position="235"/>
        <end position="244"/>
    </location>
</feature>
<feature type="sequence conflict" description="In Ref. 1; AAB62324." evidence="6" ref="1">
    <original>D</original>
    <variation>H</variation>
    <location>
        <position position="12"/>
    </location>
</feature>
<feature type="sequence conflict" description="In Ref. 1; AAB62324." evidence="6" ref="1">
    <original>S</original>
    <variation>I</variation>
    <location>
        <position position="213"/>
    </location>
</feature>
<feature type="sequence conflict" description="In Ref. 1; AAB62324." evidence="6" ref="1">
    <original>P</original>
    <variation>T</variation>
    <location>
        <position position="248"/>
    </location>
</feature>
<feature type="sequence conflict" description="In Ref. 1; AAB62324." evidence="6" ref="1">
    <original>AY</original>
    <variation>RS</variation>
    <location>
        <begin position="314"/>
        <end position="315"/>
    </location>
</feature>
<sequence>MHLPGCAPAMADGSFSLAGHLLRSPGGSTSRLHSIEAILGFTKEDGILDTFPAERSSRSSKERDPRLGAQPACPKAPAGGSESSPPAAPGFVPEYEATRPCYPKEQGEARPSPGLSVGPAAGDSKLSEEEPPKKKHRRNRTTFTTYQLHELERAFEKSHYPDVYSREELAGKVNLPEVRVQVWFQNRRAKWRRQEKLEVSSMKLQDSPLLSFSRSPPSSALAPLGTGPGSGSGPPGSALPLEPWLGPPLPGGGATALQSLPGFGPPGQGLPASYTPPPPFLNSAPLGPGLQQLGPPPAYPCAPAFGDKFSLEEAYPRNSSIAALRLKAKEHIQAIGKPWQAL</sequence>
<evidence type="ECO:0000250" key="1"/>
<evidence type="ECO:0000255" key="2"/>
<evidence type="ECO:0000255" key="3">
    <source>
        <dbReference type="PROSITE-ProRule" id="PRU00108"/>
    </source>
</evidence>
<evidence type="ECO:0000255" key="4">
    <source>
        <dbReference type="PROSITE-ProRule" id="PRU00138"/>
    </source>
</evidence>
<evidence type="ECO:0000256" key="5">
    <source>
        <dbReference type="SAM" id="MobiDB-lite"/>
    </source>
</evidence>
<evidence type="ECO:0000305" key="6"/>
<keyword id="KW-0217">Developmental protein</keyword>
<keyword id="KW-0238">DNA-binding</keyword>
<keyword id="KW-0371">Homeobox</keyword>
<keyword id="KW-0539">Nucleus</keyword>
<keyword id="KW-1185">Reference proteome</keyword>
<keyword id="KW-0804">Transcription</keyword>
<keyword id="KW-0805">Transcription regulation</keyword>
<dbReference type="EMBL" id="AF001906">
    <property type="protein sequence ID" value="AAB62324.1"/>
    <property type="molecule type" value="mRNA"/>
</dbReference>
<dbReference type="EMBL" id="U73177">
    <property type="protein sequence ID" value="AAC53129.1"/>
    <property type="molecule type" value="mRNA"/>
</dbReference>
<dbReference type="EMBL" id="CH466528">
    <property type="protein sequence ID" value="EDL09676.1"/>
    <property type="molecule type" value="Genomic_DNA"/>
</dbReference>
<dbReference type="EMBL" id="BC024731">
    <property type="protein sequence ID" value="AAH24731.1"/>
    <property type="molecule type" value="mRNA"/>
</dbReference>
<dbReference type="EMBL" id="BC058757">
    <property type="protein sequence ID" value="AAH58757.1"/>
    <property type="molecule type" value="mRNA"/>
</dbReference>
<dbReference type="CCDS" id="CCDS29311.1"/>
<dbReference type="RefSeq" id="NP_038861.2">
    <property type="nucleotide sequence ID" value="NM_013833.2"/>
</dbReference>
<dbReference type="SMR" id="O35602"/>
<dbReference type="BioGRID" id="202604">
    <property type="interactions" value="1"/>
</dbReference>
<dbReference type="FunCoup" id="O35602">
    <property type="interactions" value="15"/>
</dbReference>
<dbReference type="IntAct" id="O35602">
    <property type="interactions" value="2"/>
</dbReference>
<dbReference type="STRING" id="10090.ENSMUSP00000025396"/>
<dbReference type="PhosphoSitePlus" id="O35602"/>
<dbReference type="PaxDb" id="10090-ENSMUSP00000025396"/>
<dbReference type="ProteomicsDB" id="256852"/>
<dbReference type="Antibodypedia" id="9851">
    <property type="antibodies" value="297 antibodies from 23 providers"/>
</dbReference>
<dbReference type="DNASU" id="19434"/>
<dbReference type="Ensembl" id="ENSMUST00000025396.5">
    <property type="protein sequence ID" value="ENSMUSP00000025396.4"/>
    <property type="gene ID" value="ENSMUSG00000024518.5"/>
</dbReference>
<dbReference type="GeneID" id="19434"/>
<dbReference type="KEGG" id="mmu:19434"/>
<dbReference type="UCSC" id="uc008ffl.1">
    <property type="organism name" value="mouse"/>
</dbReference>
<dbReference type="AGR" id="MGI:109632"/>
<dbReference type="CTD" id="30062"/>
<dbReference type="MGI" id="MGI:109632">
    <property type="gene designation" value="Rax"/>
</dbReference>
<dbReference type="VEuPathDB" id="HostDB:ENSMUSG00000024518"/>
<dbReference type="eggNOG" id="KOG0490">
    <property type="taxonomic scope" value="Eukaryota"/>
</dbReference>
<dbReference type="GeneTree" id="ENSGT00940000162144"/>
<dbReference type="HOGENOM" id="CLU_047013_2_0_1"/>
<dbReference type="InParanoid" id="O35602"/>
<dbReference type="OMA" id="VMMMDER"/>
<dbReference type="OrthoDB" id="6159439at2759"/>
<dbReference type="PhylomeDB" id="O35602"/>
<dbReference type="TreeFam" id="TF315976"/>
<dbReference type="BioGRID-ORCS" id="19434">
    <property type="hits" value="2 hits in 76 CRISPR screens"/>
</dbReference>
<dbReference type="ChiTaRS" id="Rax">
    <property type="organism name" value="mouse"/>
</dbReference>
<dbReference type="PRO" id="PR:O35602"/>
<dbReference type="Proteomes" id="UP000000589">
    <property type="component" value="Chromosome 18"/>
</dbReference>
<dbReference type="RNAct" id="O35602">
    <property type="molecule type" value="protein"/>
</dbReference>
<dbReference type="Bgee" id="ENSMUSG00000024518">
    <property type="expression patterns" value="Expressed in optic vesicle and 57 other cell types or tissues"/>
</dbReference>
<dbReference type="ExpressionAtlas" id="O35602">
    <property type="expression patterns" value="baseline and differential"/>
</dbReference>
<dbReference type="GO" id="GO:0005634">
    <property type="term" value="C:nucleus"/>
    <property type="evidence" value="ECO:0007669"/>
    <property type="project" value="UniProtKB-SubCell"/>
</dbReference>
<dbReference type="GO" id="GO:0001228">
    <property type="term" value="F:DNA-binding transcription activator activity, RNA polymerase II-specific"/>
    <property type="evidence" value="ECO:0007669"/>
    <property type="project" value="Ensembl"/>
</dbReference>
<dbReference type="GO" id="GO:0000978">
    <property type="term" value="F:RNA polymerase II cis-regulatory region sequence-specific DNA binding"/>
    <property type="evidence" value="ECO:0007669"/>
    <property type="project" value="Ensembl"/>
</dbReference>
<dbReference type="GO" id="GO:0007420">
    <property type="term" value="P:brain development"/>
    <property type="evidence" value="ECO:0000315"/>
    <property type="project" value="MGI"/>
</dbReference>
<dbReference type="GO" id="GO:0043010">
    <property type="term" value="P:camera-type eye development"/>
    <property type="evidence" value="ECO:0000315"/>
    <property type="project" value="MGI"/>
</dbReference>
<dbReference type="GO" id="GO:0021854">
    <property type="term" value="P:hypothalamus development"/>
    <property type="evidence" value="ECO:0000315"/>
    <property type="project" value="MGI"/>
</dbReference>
<dbReference type="GO" id="GO:0060173">
    <property type="term" value="P:limb development"/>
    <property type="evidence" value="ECO:0000315"/>
    <property type="project" value="MGI"/>
</dbReference>
<dbReference type="GO" id="GO:0007389">
    <property type="term" value="P:pattern specification process"/>
    <property type="evidence" value="ECO:0000315"/>
    <property type="project" value="MGI"/>
</dbReference>
<dbReference type="CDD" id="cd00086">
    <property type="entry name" value="homeodomain"/>
    <property type="match status" value="1"/>
</dbReference>
<dbReference type="FunFam" id="1.10.10.60:FF:000071">
    <property type="entry name" value="Retinal homeobox gene 2"/>
    <property type="match status" value="1"/>
</dbReference>
<dbReference type="Gene3D" id="1.10.10.60">
    <property type="entry name" value="Homeodomain-like"/>
    <property type="match status" value="1"/>
</dbReference>
<dbReference type="InterPro" id="IPR001356">
    <property type="entry name" value="HD"/>
</dbReference>
<dbReference type="InterPro" id="IPR017970">
    <property type="entry name" value="Homeobox_CS"/>
</dbReference>
<dbReference type="InterPro" id="IPR009057">
    <property type="entry name" value="Homeodomain-like_sf"/>
</dbReference>
<dbReference type="InterPro" id="IPR003654">
    <property type="entry name" value="OAR_dom"/>
</dbReference>
<dbReference type="InterPro" id="IPR043562">
    <property type="entry name" value="RAX/RAX2"/>
</dbReference>
<dbReference type="PANTHER" id="PTHR46271">
    <property type="entry name" value="HOMEOBOX PROTEIN, PUTATIVE-RELATED"/>
    <property type="match status" value="1"/>
</dbReference>
<dbReference type="PANTHER" id="PTHR46271:SF3">
    <property type="entry name" value="RETINAL HOMEOBOX PROTEIN RX"/>
    <property type="match status" value="1"/>
</dbReference>
<dbReference type="Pfam" id="PF00046">
    <property type="entry name" value="Homeodomain"/>
    <property type="match status" value="1"/>
</dbReference>
<dbReference type="Pfam" id="PF03826">
    <property type="entry name" value="OAR"/>
    <property type="match status" value="1"/>
</dbReference>
<dbReference type="SMART" id="SM00389">
    <property type="entry name" value="HOX"/>
    <property type="match status" value="1"/>
</dbReference>
<dbReference type="SUPFAM" id="SSF46689">
    <property type="entry name" value="Homeodomain-like"/>
    <property type="match status" value="1"/>
</dbReference>
<dbReference type="PROSITE" id="PS00027">
    <property type="entry name" value="HOMEOBOX_1"/>
    <property type="match status" value="1"/>
</dbReference>
<dbReference type="PROSITE" id="PS50071">
    <property type="entry name" value="HOMEOBOX_2"/>
    <property type="match status" value="1"/>
</dbReference>
<dbReference type="PROSITE" id="PS50803">
    <property type="entry name" value="OAR"/>
    <property type="match status" value="1"/>
</dbReference>
<proteinExistence type="evidence at transcript level"/>
<accession>O35602</accession>
<accession>O08748</accession>
<accession>Q6GT92</accession>
<organism>
    <name type="scientific">Mus musculus</name>
    <name type="common">Mouse</name>
    <dbReference type="NCBI Taxonomy" id="10090"/>
    <lineage>
        <taxon>Eukaryota</taxon>
        <taxon>Metazoa</taxon>
        <taxon>Chordata</taxon>
        <taxon>Craniata</taxon>
        <taxon>Vertebrata</taxon>
        <taxon>Euteleostomi</taxon>
        <taxon>Mammalia</taxon>
        <taxon>Eutheria</taxon>
        <taxon>Euarchontoglires</taxon>
        <taxon>Glires</taxon>
        <taxon>Rodentia</taxon>
        <taxon>Myomorpha</taxon>
        <taxon>Muroidea</taxon>
        <taxon>Muridae</taxon>
        <taxon>Murinae</taxon>
        <taxon>Mus</taxon>
        <taxon>Mus</taxon>
    </lineage>
</organism>